<proteinExistence type="evidence at transcript level"/>
<sequence length="161" mass="17361">MPQNASVIITQATAVITGSFLSGLMMGLSVVDIPVVLDTATQASQLLQHFTRLYDIGHKMMPSLAVTTCLLYGYTASSTRTTGGSGLPHIIAAVTTISMVPFTWLVMAPTNNALFRMHANPAAANLGEVRRLLVRWAQLHAVRSLFPLMGSVLGLRQILRE</sequence>
<reference key="1">
    <citation type="journal article" date="2005" name="Nature">
        <title>Genomic sequence of the pathogenic and allergenic filamentous fungus Aspergillus fumigatus.</title>
        <authorList>
            <person name="Nierman W.C."/>
            <person name="Pain A."/>
            <person name="Anderson M.J."/>
            <person name="Wortman J.R."/>
            <person name="Kim H.S."/>
            <person name="Arroyo J."/>
            <person name="Berriman M."/>
            <person name="Abe K."/>
            <person name="Archer D.B."/>
            <person name="Bermejo C."/>
            <person name="Bennett J.W."/>
            <person name="Bowyer P."/>
            <person name="Chen D."/>
            <person name="Collins M."/>
            <person name="Coulsen R."/>
            <person name="Davies R."/>
            <person name="Dyer P.S."/>
            <person name="Farman M.L."/>
            <person name="Fedorova N."/>
            <person name="Fedorova N.D."/>
            <person name="Feldblyum T.V."/>
            <person name="Fischer R."/>
            <person name="Fosker N."/>
            <person name="Fraser A."/>
            <person name="Garcia J.L."/>
            <person name="Garcia M.J."/>
            <person name="Goble A."/>
            <person name="Goldman G.H."/>
            <person name="Gomi K."/>
            <person name="Griffith-Jones S."/>
            <person name="Gwilliam R."/>
            <person name="Haas B.J."/>
            <person name="Haas H."/>
            <person name="Harris D.E."/>
            <person name="Horiuchi H."/>
            <person name="Huang J."/>
            <person name="Humphray S."/>
            <person name="Jimenez J."/>
            <person name="Keller N."/>
            <person name="Khouri H."/>
            <person name="Kitamoto K."/>
            <person name="Kobayashi T."/>
            <person name="Konzack S."/>
            <person name="Kulkarni R."/>
            <person name="Kumagai T."/>
            <person name="Lafton A."/>
            <person name="Latge J.-P."/>
            <person name="Li W."/>
            <person name="Lord A."/>
            <person name="Lu C."/>
            <person name="Majoros W.H."/>
            <person name="May G.S."/>
            <person name="Miller B.L."/>
            <person name="Mohamoud Y."/>
            <person name="Molina M."/>
            <person name="Monod M."/>
            <person name="Mouyna I."/>
            <person name="Mulligan S."/>
            <person name="Murphy L.D."/>
            <person name="O'Neil S."/>
            <person name="Paulsen I."/>
            <person name="Penalva M.A."/>
            <person name="Pertea M."/>
            <person name="Price C."/>
            <person name="Pritchard B.L."/>
            <person name="Quail M.A."/>
            <person name="Rabbinowitsch E."/>
            <person name="Rawlins N."/>
            <person name="Rajandream M.A."/>
            <person name="Reichard U."/>
            <person name="Renauld H."/>
            <person name="Robson G.D."/>
            <person name="Rodriguez de Cordoba S."/>
            <person name="Rodriguez-Pena J.M."/>
            <person name="Ronning C.M."/>
            <person name="Rutter S."/>
            <person name="Salzberg S.L."/>
            <person name="Sanchez M."/>
            <person name="Sanchez-Ferrero J.C."/>
            <person name="Saunders D."/>
            <person name="Seeger K."/>
            <person name="Squares R."/>
            <person name="Squares S."/>
            <person name="Takeuchi M."/>
            <person name="Tekaia F."/>
            <person name="Turner G."/>
            <person name="Vazquez de Aldana C.R."/>
            <person name="Weidman J."/>
            <person name="White O."/>
            <person name="Woodward J.R."/>
            <person name="Yu J.-H."/>
            <person name="Fraser C.M."/>
            <person name="Galagan J.E."/>
            <person name="Asai K."/>
            <person name="Machida M."/>
            <person name="Hall N."/>
            <person name="Barrell B.G."/>
            <person name="Denning D.W."/>
        </authorList>
    </citation>
    <scope>NUCLEOTIDE SEQUENCE [LARGE SCALE GENOMIC DNA]</scope>
    <source>
        <strain>ATCC MYA-4609 / CBS 101355 / FGSC A1100 / Af293</strain>
    </source>
</reference>
<reference key="2">
    <citation type="journal article" date="2012" name="PLoS ONE">
        <title>Trypacidin, a spore-borne toxin from Aspergillus fumigatus, is cytotoxic to lung cells.</title>
        <authorList>
            <person name="Gauthier T."/>
            <person name="Wang X."/>
            <person name="Sifuentes Dos Santos J."/>
            <person name="Fysikopoulos A."/>
            <person name="Tadrist S."/>
            <person name="Canlet C."/>
            <person name="Artigot M.P."/>
            <person name="Loiseau N."/>
            <person name="Oswald I.P."/>
            <person name="Puel O."/>
        </authorList>
    </citation>
    <scope>FUNCTION</scope>
    <scope>TISSUE SPECIFICITY</scope>
</reference>
<reference key="3">
    <citation type="journal article" date="2015" name="Appl. Microbiol. Biotechnol.">
        <title>Identification of the antiphagocytic trypacidin gene cluster in the human-pathogenic fungus Aspergillus fumigatus.</title>
        <authorList>
            <person name="Mattern D.J."/>
            <person name="Schoeler H."/>
            <person name="Weber J."/>
            <person name="Novohradska S."/>
            <person name="Kraibooj K."/>
            <person name="Dahse H.M."/>
            <person name="Hillmann F."/>
            <person name="Valiante V."/>
            <person name="Figge M.T."/>
            <person name="Brakhage A.A."/>
        </authorList>
    </citation>
    <scope>FUNCTION</scope>
</reference>
<reference key="4">
    <citation type="journal article" date="2016" name="Environ. Microbiol.">
        <title>Redundant synthesis of a conidial polyketide by two distinct secondary metabolite clusters in Aspergillus fumigatus.</title>
        <authorList>
            <person name="Throckmorton K."/>
            <person name="Lim F.Y."/>
            <person name="Kontoyiannis D.P."/>
            <person name="Zheng W."/>
            <person name="Keller N.P."/>
        </authorList>
    </citation>
    <scope>FUNCTION</scope>
    <scope>INDUCTION</scope>
</reference>
<evidence type="ECO:0000250" key="1">
    <source>
        <dbReference type="UniProtKB" id="Q0CCX8"/>
    </source>
</evidence>
<evidence type="ECO:0000255" key="2"/>
<evidence type="ECO:0000255" key="3">
    <source>
        <dbReference type="PROSITE-ProRule" id="PRU00498"/>
    </source>
</evidence>
<evidence type="ECO:0000269" key="4">
    <source>
    </source>
</evidence>
<evidence type="ECO:0000269" key="5">
    <source>
    </source>
</evidence>
<evidence type="ECO:0000269" key="6">
    <source>
    </source>
</evidence>
<evidence type="ECO:0000303" key="7">
    <source>
    </source>
</evidence>
<evidence type="ECO:0000303" key="8">
    <source>
    </source>
</evidence>
<evidence type="ECO:0000305" key="9"/>
<evidence type="ECO:0000305" key="10">
    <source>
    </source>
</evidence>
<evidence type="ECO:0000305" key="11">
    <source>
    </source>
</evidence>
<keyword id="KW-0325">Glycoprotein</keyword>
<keyword id="KW-0472">Membrane</keyword>
<keyword id="KW-0503">Monooxygenase</keyword>
<keyword id="KW-0560">Oxidoreductase</keyword>
<keyword id="KW-1185">Reference proteome</keyword>
<keyword id="KW-0812">Transmembrane</keyword>
<keyword id="KW-1133">Transmembrane helix</keyword>
<gene>
    <name evidence="7" type="primary">tpcL</name>
    <name evidence="8" type="synonym">tynL</name>
    <name type="ORF">AFUA_4G14480</name>
</gene>
<name>TPCL_ASPFU</name>
<feature type="chain" id="PRO_0000437098" description="Anthrone oxygenase tpcL">
    <location>
        <begin position="1"/>
        <end position="161"/>
    </location>
</feature>
<feature type="transmembrane region" description="Helical" evidence="2">
    <location>
        <begin position="15"/>
        <end position="35"/>
    </location>
</feature>
<feature type="transmembrane region" description="Helical" evidence="2">
    <location>
        <begin position="56"/>
        <end position="74"/>
    </location>
</feature>
<feature type="transmembrane region" description="Helical" evidence="2">
    <location>
        <begin position="87"/>
        <end position="107"/>
    </location>
</feature>
<feature type="transmembrane region" description="Helical" evidence="2">
    <location>
        <begin position="136"/>
        <end position="155"/>
    </location>
</feature>
<feature type="glycosylation site" description="N-linked (GlcNAc...) asparagine" evidence="3">
    <location>
        <position position="4"/>
    </location>
</feature>
<comment type="function">
    <text evidence="1 4 5 6">Anthrone oxygenase; part of the gene cluster that mediates the biosynthesis of trypacidin, a mycotoxin with antiprotozoal activity and that plays a role in the infection process (PubMed:26242966, PubMed:26278536). The pathway begins with the synthesis of atrochrysone thioester by the polyketide synthase (PKS) tpcC (PubMed:26242966). The atrochrysone carboxyl ACP thioesterase tpcB then breaks the thioester bond and releases the atrochrysone carboxylic acid from tpcC (PubMed:26242966). The decarboxylase tpcK converts atrochrysone carboxylic acid to atrochrysone which is further reduced into emodin anthrone (PubMed:26242966). The next step is performed by the emodin anthrone oxygenase tpcL that catalyzes the oxidation of emodinanthrone to emodin (PubMed:26242966). Emodin O-methyltransferase encoded by tpcA catalyzes methylation of the 8-hydroxy group of emodin to form questin (PubMed:26242966). Ring cleavage of questin by questin oxidase tpcI leads to desmethylsulochrin via several intermediates including questin epoxide (By similarity). Another methylation step catalyzed by tpcM leads to the formation of sulochrin which is further converted to monomethylsulfochrin by tpcH. Finally, the tpcJ catalyzes the conversion of monomethylsulfochrin to trypacidin (PubMed:26242966). Trypacidin is toxic for human pulmonary and bronchial epithelial cells by initiating the intracellular formation of nitric oxide (NO) and hydrogen peroxide (H(2)O(2)), thus triggering host necrotic cell death (PubMed:22319557). The trypacidin pathway is also able to produce endocrocin via a distinct route from the endocrocin Enc pathway (PubMed:26242966).</text>
</comment>
<comment type="catalytic activity">
    <reaction evidence="11">
        <text>emodin anthrone + O2 = emodin + H2O + H(+)</text>
        <dbReference type="Rhea" id="RHEA:64268"/>
        <dbReference type="ChEBI" id="CHEBI:15377"/>
        <dbReference type="ChEBI" id="CHEBI:15378"/>
        <dbReference type="ChEBI" id="CHEBI:15379"/>
        <dbReference type="ChEBI" id="CHEBI:77659"/>
        <dbReference type="ChEBI" id="CHEBI:150013"/>
    </reaction>
    <physiologicalReaction direction="left-to-right" evidence="11">
        <dbReference type="Rhea" id="RHEA:64269"/>
    </physiologicalReaction>
</comment>
<comment type="pathway">
    <text evidence="5">Secondary metabolite biosynthesis.</text>
</comment>
<comment type="subcellular location">
    <subcellularLocation>
        <location evidence="2">Membrane</location>
        <topology evidence="2">Multi-pass membrane protein</topology>
    </subcellularLocation>
</comment>
<comment type="tissue specificity">
    <text evidence="10">Specifically expressed in conidia (PubMed:22319557).</text>
</comment>
<comment type="induction">
    <text evidence="5">Expression is positively regulated by the transcription factors brlA and laeA (PubMed:26242966).</text>
</comment>
<comment type="similarity">
    <text evidence="9">Belongs to the anthrone oxygenase family.</text>
</comment>
<dbReference type="EC" id="1.10.3.-" evidence="11"/>
<dbReference type="EMBL" id="AAHF01000005">
    <property type="protein sequence ID" value="EAL89348.2"/>
    <property type="molecule type" value="Genomic_DNA"/>
</dbReference>
<dbReference type="RefSeq" id="XP_751386.2">
    <property type="nucleotide sequence ID" value="XM_746293.2"/>
</dbReference>
<dbReference type="STRING" id="330879.Q4WQY6"/>
<dbReference type="GlyCosmos" id="Q4WQY6">
    <property type="glycosylation" value="1 site, No reported glycans"/>
</dbReference>
<dbReference type="EnsemblFungi" id="EAL89348">
    <property type="protein sequence ID" value="EAL89348"/>
    <property type="gene ID" value="AFUA_4G14480"/>
</dbReference>
<dbReference type="GeneID" id="3509610"/>
<dbReference type="KEGG" id="afm:AFUA_4G14480"/>
<dbReference type="VEuPathDB" id="FungiDB:Afu4g14480"/>
<dbReference type="eggNOG" id="ENOG502SBMN">
    <property type="taxonomic scope" value="Eukaryota"/>
</dbReference>
<dbReference type="HOGENOM" id="CLU_105974_0_0_1"/>
<dbReference type="InParanoid" id="Q4WQY6"/>
<dbReference type="OMA" id="RMYHYGH"/>
<dbReference type="OrthoDB" id="5954308at2759"/>
<dbReference type="Proteomes" id="UP000002530">
    <property type="component" value="Chromosome 4"/>
</dbReference>
<dbReference type="GO" id="GO:0016020">
    <property type="term" value="C:membrane"/>
    <property type="evidence" value="ECO:0007669"/>
    <property type="project" value="UniProtKB-SubCell"/>
</dbReference>
<dbReference type="GO" id="GO:0004497">
    <property type="term" value="F:monooxygenase activity"/>
    <property type="evidence" value="ECO:0007669"/>
    <property type="project" value="UniProtKB-KW"/>
</dbReference>
<dbReference type="GO" id="GO:0044550">
    <property type="term" value="P:secondary metabolite biosynthetic process"/>
    <property type="evidence" value="ECO:0000317"/>
    <property type="project" value="AspGD"/>
</dbReference>
<dbReference type="InterPro" id="IPR013901">
    <property type="entry name" value="Anthrone_oxy"/>
</dbReference>
<dbReference type="PANTHER" id="PTHR35042">
    <property type="entry name" value="ANTHRONE OXYGENASE ENCC"/>
    <property type="match status" value="1"/>
</dbReference>
<dbReference type="PANTHER" id="PTHR35042:SF3">
    <property type="entry name" value="ANTHRONE OXYGENASE-RELATED"/>
    <property type="match status" value="1"/>
</dbReference>
<dbReference type="Pfam" id="PF08592">
    <property type="entry name" value="Anthrone_oxy"/>
    <property type="match status" value="1"/>
</dbReference>
<organism>
    <name type="scientific">Aspergillus fumigatus (strain ATCC MYA-4609 / CBS 101355 / FGSC A1100 / Af293)</name>
    <name type="common">Neosartorya fumigata</name>
    <dbReference type="NCBI Taxonomy" id="330879"/>
    <lineage>
        <taxon>Eukaryota</taxon>
        <taxon>Fungi</taxon>
        <taxon>Dikarya</taxon>
        <taxon>Ascomycota</taxon>
        <taxon>Pezizomycotina</taxon>
        <taxon>Eurotiomycetes</taxon>
        <taxon>Eurotiomycetidae</taxon>
        <taxon>Eurotiales</taxon>
        <taxon>Aspergillaceae</taxon>
        <taxon>Aspergillus</taxon>
        <taxon>Aspergillus subgen. Fumigati</taxon>
    </lineage>
</organism>
<protein>
    <recommendedName>
        <fullName evidence="7">Anthrone oxygenase tpcL</fullName>
        <ecNumber evidence="11">1.10.3.-</ecNumber>
    </recommendedName>
    <alternativeName>
        <fullName evidence="7">Trypacidin synthesis protein L</fullName>
    </alternativeName>
</protein>
<accession>Q4WQY6</accession>